<reference key="1">
    <citation type="submission" date="2007-11" db="EMBL/GenBank/DDBJ databases">
        <authorList>
            <consortium name="The Salmonella enterica serovar Arizonae Genome Sequencing Project"/>
            <person name="McClelland M."/>
            <person name="Sanderson E.K."/>
            <person name="Porwollik S."/>
            <person name="Spieth J."/>
            <person name="Clifton W.S."/>
            <person name="Fulton R."/>
            <person name="Chunyan W."/>
            <person name="Wollam A."/>
            <person name="Shah N."/>
            <person name="Pepin K."/>
            <person name="Bhonagiri V."/>
            <person name="Nash W."/>
            <person name="Johnson M."/>
            <person name="Thiruvilangam P."/>
            <person name="Wilson R."/>
        </authorList>
    </citation>
    <scope>NUCLEOTIDE SEQUENCE [LARGE SCALE GENOMIC DNA]</scope>
    <source>
        <strain>ATCC BAA-731 / CDC346-86 / RSK2980</strain>
    </source>
</reference>
<keyword id="KW-0378">Hydrolase</keyword>
<keyword id="KW-0460">Magnesium</keyword>
<keyword id="KW-0479">Metal-binding</keyword>
<keyword id="KW-0546">Nucleotide metabolism</keyword>
<keyword id="KW-1185">Reference proteome</keyword>
<comment type="function">
    <text evidence="1">This enzyme is involved in nucleotide metabolism: it produces dUMP, the immediate precursor of thymidine nucleotides and it decreases the intracellular concentration of dUTP so that uracil cannot be incorporated into DNA.</text>
</comment>
<comment type="catalytic activity">
    <reaction evidence="1">
        <text>dUTP + H2O = dUMP + diphosphate + H(+)</text>
        <dbReference type="Rhea" id="RHEA:10248"/>
        <dbReference type="ChEBI" id="CHEBI:15377"/>
        <dbReference type="ChEBI" id="CHEBI:15378"/>
        <dbReference type="ChEBI" id="CHEBI:33019"/>
        <dbReference type="ChEBI" id="CHEBI:61555"/>
        <dbReference type="ChEBI" id="CHEBI:246422"/>
        <dbReference type="EC" id="3.6.1.23"/>
    </reaction>
</comment>
<comment type="cofactor">
    <cofactor evidence="1">
        <name>Mg(2+)</name>
        <dbReference type="ChEBI" id="CHEBI:18420"/>
    </cofactor>
</comment>
<comment type="pathway">
    <text evidence="1">Pyrimidine metabolism; dUMP biosynthesis; dUMP from dCTP (dUTP route): step 2/2.</text>
</comment>
<comment type="similarity">
    <text evidence="1">Belongs to the dUTPase family.</text>
</comment>
<feature type="chain" id="PRO_1000076068" description="Deoxyuridine 5'-triphosphate nucleotidohydrolase">
    <location>
        <begin position="1"/>
        <end position="152"/>
    </location>
</feature>
<feature type="binding site" evidence="1">
    <location>
        <begin position="71"/>
        <end position="73"/>
    </location>
    <ligand>
        <name>substrate</name>
    </ligand>
</feature>
<feature type="binding site" evidence="1">
    <location>
        <position position="84"/>
    </location>
    <ligand>
        <name>substrate</name>
    </ligand>
</feature>
<feature type="binding site" evidence="1">
    <location>
        <begin position="88"/>
        <end position="90"/>
    </location>
    <ligand>
        <name>substrate</name>
    </ligand>
</feature>
<feature type="binding site" evidence="1">
    <location>
        <position position="98"/>
    </location>
    <ligand>
        <name>substrate</name>
    </ligand>
</feature>
<dbReference type="EC" id="3.6.1.23" evidence="1"/>
<dbReference type="EMBL" id="CP000880">
    <property type="protein sequence ID" value="ABX23704.1"/>
    <property type="molecule type" value="Genomic_DNA"/>
</dbReference>
<dbReference type="SMR" id="A9MKN5"/>
<dbReference type="STRING" id="41514.SARI_03910"/>
<dbReference type="KEGG" id="ses:SARI_03910"/>
<dbReference type="HOGENOM" id="CLU_068508_1_1_6"/>
<dbReference type="UniPathway" id="UPA00610">
    <property type="reaction ID" value="UER00666"/>
</dbReference>
<dbReference type="Proteomes" id="UP000002084">
    <property type="component" value="Chromosome"/>
</dbReference>
<dbReference type="GO" id="GO:0004170">
    <property type="term" value="F:dUTP diphosphatase activity"/>
    <property type="evidence" value="ECO:0007669"/>
    <property type="project" value="UniProtKB-UniRule"/>
</dbReference>
<dbReference type="GO" id="GO:0000287">
    <property type="term" value="F:magnesium ion binding"/>
    <property type="evidence" value="ECO:0007669"/>
    <property type="project" value="UniProtKB-UniRule"/>
</dbReference>
<dbReference type="GO" id="GO:0006226">
    <property type="term" value="P:dUMP biosynthetic process"/>
    <property type="evidence" value="ECO:0007669"/>
    <property type="project" value="UniProtKB-UniRule"/>
</dbReference>
<dbReference type="GO" id="GO:0046081">
    <property type="term" value="P:dUTP catabolic process"/>
    <property type="evidence" value="ECO:0007669"/>
    <property type="project" value="InterPro"/>
</dbReference>
<dbReference type="CDD" id="cd07557">
    <property type="entry name" value="trimeric_dUTPase"/>
    <property type="match status" value="1"/>
</dbReference>
<dbReference type="FunFam" id="2.70.40.10:FF:000002">
    <property type="entry name" value="dUTP diphosphatase"/>
    <property type="match status" value="1"/>
</dbReference>
<dbReference type="Gene3D" id="2.70.40.10">
    <property type="match status" value="1"/>
</dbReference>
<dbReference type="HAMAP" id="MF_00116">
    <property type="entry name" value="dUTPase_bact"/>
    <property type="match status" value="1"/>
</dbReference>
<dbReference type="InterPro" id="IPR008181">
    <property type="entry name" value="dUTPase"/>
</dbReference>
<dbReference type="InterPro" id="IPR029054">
    <property type="entry name" value="dUTPase-like"/>
</dbReference>
<dbReference type="InterPro" id="IPR036157">
    <property type="entry name" value="dUTPase-like_sf"/>
</dbReference>
<dbReference type="InterPro" id="IPR033704">
    <property type="entry name" value="dUTPase_trimeric"/>
</dbReference>
<dbReference type="NCBIfam" id="TIGR00576">
    <property type="entry name" value="dut"/>
    <property type="match status" value="1"/>
</dbReference>
<dbReference type="NCBIfam" id="NF001862">
    <property type="entry name" value="PRK00601.1"/>
    <property type="match status" value="1"/>
</dbReference>
<dbReference type="PANTHER" id="PTHR11241">
    <property type="entry name" value="DEOXYURIDINE 5'-TRIPHOSPHATE NUCLEOTIDOHYDROLASE"/>
    <property type="match status" value="1"/>
</dbReference>
<dbReference type="PANTHER" id="PTHR11241:SF0">
    <property type="entry name" value="DEOXYURIDINE 5'-TRIPHOSPHATE NUCLEOTIDOHYDROLASE"/>
    <property type="match status" value="1"/>
</dbReference>
<dbReference type="Pfam" id="PF00692">
    <property type="entry name" value="dUTPase"/>
    <property type="match status" value="1"/>
</dbReference>
<dbReference type="SUPFAM" id="SSF51283">
    <property type="entry name" value="dUTPase-like"/>
    <property type="match status" value="1"/>
</dbReference>
<gene>
    <name evidence="1" type="primary">dut</name>
    <name type="ordered locus">SARI_03910</name>
</gene>
<organism>
    <name type="scientific">Salmonella arizonae (strain ATCC BAA-731 / CDC346-86 / RSK2980)</name>
    <dbReference type="NCBI Taxonomy" id="41514"/>
    <lineage>
        <taxon>Bacteria</taxon>
        <taxon>Pseudomonadati</taxon>
        <taxon>Pseudomonadota</taxon>
        <taxon>Gammaproteobacteria</taxon>
        <taxon>Enterobacterales</taxon>
        <taxon>Enterobacteriaceae</taxon>
        <taxon>Salmonella</taxon>
    </lineage>
</organism>
<sequence length="152" mass="16110">MMKKIDVKILDPRVGQQFPLPTYATSGSAGLDLRACLDGAVELAPGATTLVPTGLAIHIADPSLAAVMLPRSGLGHKHGIVLGNLVGLIDSDYQGQLMVSIWNRGQDSFTIEPGERIAQMVFVPVVQAEFNLVEAFDATERGEGGFGHSGRK</sequence>
<proteinExistence type="inferred from homology"/>
<accession>A9MKN5</accession>
<evidence type="ECO:0000255" key="1">
    <source>
        <dbReference type="HAMAP-Rule" id="MF_00116"/>
    </source>
</evidence>
<protein>
    <recommendedName>
        <fullName evidence="1">Deoxyuridine 5'-triphosphate nucleotidohydrolase</fullName>
        <shortName evidence="1">dUTPase</shortName>
        <ecNumber evidence="1">3.6.1.23</ecNumber>
    </recommendedName>
    <alternativeName>
        <fullName evidence="1">dUTP pyrophosphatase</fullName>
    </alternativeName>
</protein>
<name>DUT_SALAR</name>